<gene>
    <name evidence="1" type="primary">clpP</name>
    <name type="ordered locus">swp_3261</name>
</gene>
<sequence>MHKAPESVLNALVPMVVEQTAKGERSYDIYSRLLKERVIFLVGQVEEHMANLIVAQLLFLESESPDKDIYLYINSPGGSVTAGMAIYDTMQFIKPNVSTVCIGQAASMGAFLLAGGAEGKRHCLPNSRVMIHQPLGGFQGQASDIAIHAQEILGIKNKLNTMLAEHTGQPIEVIERDTDRDNFMSADEAAEYGLVDSVLAKRG</sequence>
<name>CLPP_SHEPW</name>
<accession>B8CRF7</accession>
<feature type="chain" id="PRO_1000189667" description="ATP-dependent Clp protease proteolytic subunit">
    <location>
        <begin position="1"/>
        <end position="203"/>
    </location>
</feature>
<feature type="active site" description="Nucleophile" evidence="1">
    <location>
        <position position="107"/>
    </location>
</feature>
<feature type="active site" evidence="1">
    <location>
        <position position="132"/>
    </location>
</feature>
<comment type="function">
    <text evidence="1">Cleaves peptides in various proteins in a process that requires ATP hydrolysis. Has a chymotrypsin-like activity. Plays a major role in the degradation of misfolded proteins.</text>
</comment>
<comment type="catalytic activity">
    <reaction evidence="1">
        <text>Hydrolysis of proteins to small peptides in the presence of ATP and magnesium. alpha-casein is the usual test substrate. In the absence of ATP, only oligopeptides shorter than five residues are hydrolyzed (such as succinyl-Leu-Tyr-|-NHMec, and Leu-Tyr-Leu-|-Tyr-Trp, in which cleavage of the -Tyr-|-Leu- and -Tyr-|-Trp bonds also occurs).</text>
        <dbReference type="EC" id="3.4.21.92"/>
    </reaction>
</comment>
<comment type="subunit">
    <text evidence="1">Fourteen ClpP subunits assemble into 2 heptameric rings which stack back to back to give a disk-like structure with a central cavity, resembling the structure of eukaryotic proteasomes.</text>
</comment>
<comment type="subcellular location">
    <subcellularLocation>
        <location evidence="1">Cytoplasm</location>
    </subcellularLocation>
</comment>
<comment type="similarity">
    <text evidence="1">Belongs to the peptidase S14 family.</text>
</comment>
<reference key="1">
    <citation type="journal article" date="2008" name="PLoS ONE">
        <title>Environmental adaptation: genomic analysis of the piezotolerant and psychrotolerant deep-sea iron reducing bacterium Shewanella piezotolerans WP3.</title>
        <authorList>
            <person name="Wang F."/>
            <person name="Wang J."/>
            <person name="Jian H."/>
            <person name="Zhang B."/>
            <person name="Li S."/>
            <person name="Wang F."/>
            <person name="Zeng X."/>
            <person name="Gao L."/>
            <person name="Bartlett D.H."/>
            <person name="Yu J."/>
            <person name="Hu S."/>
            <person name="Xiao X."/>
        </authorList>
    </citation>
    <scope>NUCLEOTIDE SEQUENCE [LARGE SCALE GENOMIC DNA]</scope>
    <source>
        <strain>WP3 / JCM 13877</strain>
    </source>
</reference>
<proteinExistence type="inferred from homology"/>
<evidence type="ECO:0000255" key="1">
    <source>
        <dbReference type="HAMAP-Rule" id="MF_00444"/>
    </source>
</evidence>
<protein>
    <recommendedName>
        <fullName evidence="1">ATP-dependent Clp protease proteolytic subunit</fullName>
        <ecNumber evidence="1">3.4.21.92</ecNumber>
    </recommendedName>
    <alternativeName>
        <fullName evidence="1">Endopeptidase Clp</fullName>
    </alternativeName>
</protein>
<dbReference type="EC" id="3.4.21.92" evidence="1"/>
<dbReference type="EMBL" id="CP000472">
    <property type="protein sequence ID" value="ACJ29965.1"/>
    <property type="molecule type" value="Genomic_DNA"/>
</dbReference>
<dbReference type="RefSeq" id="WP_020913315.1">
    <property type="nucleotide sequence ID" value="NC_011566.1"/>
</dbReference>
<dbReference type="SMR" id="B8CRF7"/>
<dbReference type="STRING" id="225849.swp_3261"/>
<dbReference type="MEROPS" id="S14.001"/>
<dbReference type="KEGG" id="swp:swp_3261"/>
<dbReference type="eggNOG" id="COG0740">
    <property type="taxonomic scope" value="Bacteria"/>
</dbReference>
<dbReference type="HOGENOM" id="CLU_058707_3_2_6"/>
<dbReference type="OrthoDB" id="9802800at2"/>
<dbReference type="Proteomes" id="UP000000753">
    <property type="component" value="Chromosome"/>
</dbReference>
<dbReference type="GO" id="GO:0005737">
    <property type="term" value="C:cytoplasm"/>
    <property type="evidence" value="ECO:0007669"/>
    <property type="project" value="UniProtKB-SubCell"/>
</dbReference>
<dbReference type="GO" id="GO:0009368">
    <property type="term" value="C:endopeptidase Clp complex"/>
    <property type="evidence" value="ECO:0007669"/>
    <property type="project" value="TreeGrafter"/>
</dbReference>
<dbReference type="GO" id="GO:0004176">
    <property type="term" value="F:ATP-dependent peptidase activity"/>
    <property type="evidence" value="ECO:0007669"/>
    <property type="project" value="InterPro"/>
</dbReference>
<dbReference type="GO" id="GO:0051117">
    <property type="term" value="F:ATPase binding"/>
    <property type="evidence" value="ECO:0007669"/>
    <property type="project" value="TreeGrafter"/>
</dbReference>
<dbReference type="GO" id="GO:0004252">
    <property type="term" value="F:serine-type endopeptidase activity"/>
    <property type="evidence" value="ECO:0007669"/>
    <property type="project" value="UniProtKB-UniRule"/>
</dbReference>
<dbReference type="GO" id="GO:0006515">
    <property type="term" value="P:protein quality control for misfolded or incompletely synthesized proteins"/>
    <property type="evidence" value="ECO:0007669"/>
    <property type="project" value="TreeGrafter"/>
</dbReference>
<dbReference type="CDD" id="cd07017">
    <property type="entry name" value="S14_ClpP_2"/>
    <property type="match status" value="1"/>
</dbReference>
<dbReference type="FunFam" id="3.90.226.10:FF:000001">
    <property type="entry name" value="ATP-dependent Clp protease proteolytic subunit"/>
    <property type="match status" value="1"/>
</dbReference>
<dbReference type="Gene3D" id="3.90.226.10">
    <property type="entry name" value="2-enoyl-CoA Hydratase, Chain A, domain 1"/>
    <property type="match status" value="1"/>
</dbReference>
<dbReference type="HAMAP" id="MF_00444">
    <property type="entry name" value="ClpP"/>
    <property type="match status" value="1"/>
</dbReference>
<dbReference type="InterPro" id="IPR001907">
    <property type="entry name" value="ClpP"/>
</dbReference>
<dbReference type="InterPro" id="IPR029045">
    <property type="entry name" value="ClpP/crotonase-like_dom_sf"/>
</dbReference>
<dbReference type="InterPro" id="IPR023562">
    <property type="entry name" value="ClpP/TepA"/>
</dbReference>
<dbReference type="InterPro" id="IPR033135">
    <property type="entry name" value="ClpP_His_AS"/>
</dbReference>
<dbReference type="InterPro" id="IPR018215">
    <property type="entry name" value="ClpP_Ser_AS"/>
</dbReference>
<dbReference type="NCBIfam" id="TIGR00493">
    <property type="entry name" value="clpP"/>
    <property type="match status" value="1"/>
</dbReference>
<dbReference type="NCBIfam" id="NF001368">
    <property type="entry name" value="PRK00277.1"/>
    <property type="match status" value="1"/>
</dbReference>
<dbReference type="NCBIfam" id="NF009205">
    <property type="entry name" value="PRK12553.1"/>
    <property type="match status" value="1"/>
</dbReference>
<dbReference type="PANTHER" id="PTHR10381">
    <property type="entry name" value="ATP-DEPENDENT CLP PROTEASE PROTEOLYTIC SUBUNIT"/>
    <property type="match status" value="1"/>
</dbReference>
<dbReference type="PANTHER" id="PTHR10381:SF70">
    <property type="entry name" value="ATP-DEPENDENT CLP PROTEASE PROTEOLYTIC SUBUNIT"/>
    <property type="match status" value="1"/>
</dbReference>
<dbReference type="Pfam" id="PF00574">
    <property type="entry name" value="CLP_protease"/>
    <property type="match status" value="1"/>
</dbReference>
<dbReference type="PRINTS" id="PR00127">
    <property type="entry name" value="CLPPROTEASEP"/>
</dbReference>
<dbReference type="SUPFAM" id="SSF52096">
    <property type="entry name" value="ClpP/crotonase"/>
    <property type="match status" value="1"/>
</dbReference>
<dbReference type="PROSITE" id="PS00382">
    <property type="entry name" value="CLP_PROTEASE_HIS"/>
    <property type="match status" value="1"/>
</dbReference>
<dbReference type="PROSITE" id="PS00381">
    <property type="entry name" value="CLP_PROTEASE_SER"/>
    <property type="match status" value="1"/>
</dbReference>
<keyword id="KW-0963">Cytoplasm</keyword>
<keyword id="KW-0378">Hydrolase</keyword>
<keyword id="KW-0645">Protease</keyword>
<keyword id="KW-0720">Serine protease</keyword>
<organism>
    <name type="scientific">Shewanella piezotolerans (strain WP3 / JCM 13877)</name>
    <dbReference type="NCBI Taxonomy" id="225849"/>
    <lineage>
        <taxon>Bacteria</taxon>
        <taxon>Pseudomonadati</taxon>
        <taxon>Pseudomonadota</taxon>
        <taxon>Gammaproteobacteria</taxon>
        <taxon>Alteromonadales</taxon>
        <taxon>Shewanellaceae</taxon>
        <taxon>Shewanella</taxon>
    </lineage>
</organism>